<proteinExistence type="inferred from homology"/>
<dbReference type="EMBL" id="AM040264">
    <property type="protein sequence ID" value="CAJ11139.1"/>
    <property type="molecule type" value="Genomic_DNA"/>
</dbReference>
<dbReference type="RefSeq" id="WP_002964288.1">
    <property type="nucleotide sequence ID" value="NZ_KN046823.1"/>
</dbReference>
<dbReference type="SMR" id="Q2YRP5"/>
<dbReference type="STRING" id="359391.BAB1_1183"/>
<dbReference type="GeneID" id="93016505"/>
<dbReference type="KEGG" id="bmf:BAB1_1183"/>
<dbReference type="PATRIC" id="fig|359391.11.peg.81"/>
<dbReference type="HOGENOM" id="CLU_047155_2_0_5"/>
<dbReference type="PhylomeDB" id="Q2YRP5"/>
<dbReference type="Proteomes" id="UP000002719">
    <property type="component" value="Chromosome I"/>
</dbReference>
<dbReference type="GO" id="GO:0005737">
    <property type="term" value="C:cytoplasm"/>
    <property type="evidence" value="ECO:0007669"/>
    <property type="project" value="UniProtKB-SubCell"/>
</dbReference>
<dbReference type="GO" id="GO:0003746">
    <property type="term" value="F:translation elongation factor activity"/>
    <property type="evidence" value="ECO:0007669"/>
    <property type="project" value="UniProtKB-UniRule"/>
</dbReference>
<dbReference type="CDD" id="cd14275">
    <property type="entry name" value="UBA_EF-Ts"/>
    <property type="match status" value="1"/>
</dbReference>
<dbReference type="FunFam" id="1.10.286.20:FF:000001">
    <property type="entry name" value="Elongation factor Ts"/>
    <property type="match status" value="1"/>
</dbReference>
<dbReference type="FunFam" id="1.10.8.10:FF:000001">
    <property type="entry name" value="Elongation factor Ts"/>
    <property type="match status" value="1"/>
</dbReference>
<dbReference type="Gene3D" id="1.10.286.20">
    <property type="match status" value="1"/>
</dbReference>
<dbReference type="Gene3D" id="1.10.8.10">
    <property type="entry name" value="DNA helicase RuvA subunit, C-terminal domain"/>
    <property type="match status" value="1"/>
</dbReference>
<dbReference type="Gene3D" id="3.30.479.20">
    <property type="entry name" value="Elongation factor Ts, dimerisation domain"/>
    <property type="match status" value="2"/>
</dbReference>
<dbReference type="HAMAP" id="MF_00050">
    <property type="entry name" value="EF_Ts"/>
    <property type="match status" value="1"/>
</dbReference>
<dbReference type="InterPro" id="IPR036402">
    <property type="entry name" value="EF-Ts_dimer_sf"/>
</dbReference>
<dbReference type="InterPro" id="IPR001816">
    <property type="entry name" value="Transl_elong_EFTs/EF1B"/>
</dbReference>
<dbReference type="InterPro" id="IPR014039">
    <property type="entry name" value="Transl_elong_EFTs/EF1B_dimer"/>
</dbReference>
<dbReference type="InterPro" id="IPR018101">
    <property type="entry name" value="Transl_elong_Ts_CS"/>
</dbReference>
<dbReference type="InterPro" id="IPR009060">
    <property type="entry name" value="UBA-like_sf"/>
</dbReference>
<dbReference type="NCBIfam" id="TIGR00116">
    <property type="entry name" value="tsf"/>
    <property type="match status" value="1"/>
</dbReference>
<dbReference type="PANTHER" id="PTHR11741">
    <property type="entry name" value="ELONGATION FACTOR TS"/>
    <property type="match status" value="1"/>
</dbReference>
<dbReference type="PANTHER" id="PTHR11741:SF0">
    <property type="entry name" value="ELONGATION FACTOR TS, MITOCHONDRIAL"/>
    <property type="match status" value="1"/>
</dbReference>
<dbReference type="Pfam" id="PF00889">
    <property type="entry name" value="EF_TS"/>
    <property type="match status" value="1"/>
</dbReference>
<dbReference type="SUPFAM" id="SSF54713">
    <property type="entry name" value="Elongation factor Ts (EF-Ts), dimerisation domain"/>
    <property type="match status" value="2"/>
</dbReference>
<dbReference type="SUPFAM" id="SSF46934">
    <property type="entry name" value="UBA-like"/>
    <property type="match status" value="1"/>
</dbReference>
<dbReference type="PROSITE" id="PS01127">
    <property type="entry name" value="EF_TS_2"/>
    <property type="match status" value="1"/>
</dbReference>
<evidence type="ECO:0000255" key="1">
    <source>
        <dbReference type="HAMAP-Rule" id="MF_00050"/>
    </source>
</evidence>
<accession>Q2YRP5</accession>
<protein>
    <recommendedName>
        <fullName evidence="1">Elongation factor Ts</fullName>
        <shortName evidence="1">EF-Ts</shortName>
    </recommendedName>
</protein>
<feature type="chain" id="PRO_0000241466" description="Elongation factor Ts">
    <location>
        <begin position="1"/>
        <end position="305"/>
    </location>
</feature>
<feature type="region of interest" description="Involved in Mg(2+) ion dislocation from EF-Tu" evidence="1">
    <location>
        <begin position="79"/>
        <end position="82"/>
    </location>
</feature>
<organism>
    <name type="scientific">Brucella abortus (strain 2308)</name>
    <dbReference type="NCBI Taxonomy" id="359391"/>
    <lineage>
        <taxon>Bacteria</taxon>
        <taxon>Pseudomonadati</taxon>
        <taxon>Pseudomonadota</taxon>
        <taxon>Alphaproteobacteria</taxon>
        <taxon>Hyphomicrobiales</taxon>
        <taxon>Brucellaceae</taxon>
        <taxon>Brucella/Ochrobactrum group</taxon>
        <taxon>Brucella</taxon>
    </lineage>
</organism>
<sequence length="305" mass="31491">MSISASLVKELRDLTGAGMMDCKAALAATEGKIEAAVDWLRAKGIAKADKKAGRTAAEGLVGVAASGNKAVVVEVNSETDFVARNDAFQELVRKIAQAALSTDGSSEAVANANVDGKTVTEAAKDAVATIGENISFRRSAALSVPQGVVATYIHNGVADGLGKLGVLVAIETAGDAEAAQAFGRQVAMHVAAVNPLALTSADVNPEAAEREKAIFIDQARQSGKPDNIIEKMVEGRMRKFYEEVVLLSQAFVINPDLTVEAALKDAEKAIGAPAKITGFARIALGEGIEKEESDFAAEVAAAAKG</sequence>
<keyword id="KW-0963">Cytoplasm</keyword>
<keyword id="KW-0251">Elongation factor</keyword>
<keyword id="KW-0648">Protein biosynthesis</keyword>
<keyword id="KW-1185">Reference proteome</keyword>
<comment type="function">
    <text evidence="1">Associates with the EF-Tu.GDP complex and induces the exchange of GDP to GTP. It remains bound to the aminoacyl-tRNA.EF-Tu.GTP complex up to the GTP hydrolysis stage on the ribosome.</text>
</comment>
<comment type="subcellular location">
    <subcellularLocation>
        <location evidence="1">Cytoplasm</location>
    </subcellularLocation>
</comment>
<comment type="similarity">
    <text evidence="1">Belongs to the EF-Ts family.</text>
</comment>
<gene>
    <name evidence="1" type="primary">tsf</name>
    <name type="ordered locus">BAB1_1183</name>
</gene>
<name>EFTS_BRUA2</name>
<reference key="1">
    <citation type="journal article" date="2005" name="Infect. Immun.">
        <title>Whole-genome analyses of speciation events in pathogenic Brucellae.</title>
        <authorList>
            <person name="Chain P.S."/>
            <person name="Comerci D.J."/>
            <person name="Tolmasky M.E."/>
            <person name="Larimer F.W."/>
            <person name="Malfatti S.A."/>
            <person name="Vergez L.M."/>
            <person name="Aguero F."/>
            <person name="Land M.L."/>
            <person name="Ugalde R.A."/>
            <person name="Garcia E."/>
        </authorList>
    </citation>
    <scope>NUCLEOTIDE SEQUENCE [LARGE SCALE GENOMIC DNA]</scope>
    <source>
        <strain>2308</strain>
    </source>
</reference>